<protein>
    <recommendedName>
        <fullName evidence="1">UDP-3-O-acylglucosamine N-acyltransferase</fullName>
        <ecNumber evidence="1">2.3.1.191</ecNumber>
    </recommendedName>
</protein>
<sequence>MAQPSFFQSPPPTTLAAIAAAANATLVDASRGEQVITGLAALDEAGPMHLAFFDNLKYADQLAMTKAGACLVSPRFEARVPSHVAVVRANQPFRAFVQLARTMHADALRPQSWFGCDGISSQAIIDPSARLEDGVVVEPLAVIGAHVEIGAGTIVGAGAVIGPHVKIGRDCNVGARTVIQCALIGNDVLIHPACAIGQDGYGFIFFGPGGHVKVPQTGRVIIQNHVEIGAGTTIDRGSLRDTVIGEGTKIDNQVQIGHNVTIGRHCLLAAQIGLAGSLTIGDNVALGAKVGINNHLTIGDGAQVTAMSGVKDDIPPNGRWGGFFAKPTKQWFREIVAVERLVRDQTATNKDEGQE</sequence>
<name>LPXD_BRASB</name>
<gene>
    <name evidence="1" type="primary">lpxD</name>
    <name type="ordered locus">BBta_4508</name>
</gene>
<comment type="function">
    <text evidence="1">Catalyzes the N-acylation of UDP-3-O-acylglucosamine using 3-hydroxyacyl-ACP as the acyl donor. Is involved in the biosynthesis of lipid A, a phosphorylated glycolipid that anchors the lipopolysaccharide to the outer membrane of the cell.</text>
</comment>
<comment type="catalytic activity">
    <reaction evidence="1">
        <text>a UDP-3-O-[(3R)-3-hydroxyacyl]-alpha-D-glucosamine + a (3R)-hydroxyacyl-[ACP] = a UDP-2-N,3-O-bis[(3R)-3-hydroxyacyl]-alpha-D-glucosamine + holo-[ACP] + H(+)</text>
        <dbReference type="Rhea" id="RHEA:53836"/>
        <dbReference type="Rhea" id="RHEA-COMP:9685"/>
        <dbReference type="Rhea" id="RHEA-COMP:9945"/>
        <dbReference type="ChEBI" id="CHEBI:15378"/>
        <dbReference type="ChEBI" id="CHEBI:64479"/>
        <dbReference type="ChEBI" id="CHEBI:78827"/>
        <dbReference type="ChEBI" id="CHEBI:137740"/>
        <dbReference type="ChEBI" id="CHEBI:137748"/>
        <dbReference type="EC" id="2.3.1.191"/>
    </reaction>
</comment>
<comment type="pathway">
    <text evidence="1">Bacterial outer membrane biogenesis; LPS lipid A biosynthesis.</text>
</comment>
<comment type="subunit">
    <text evidence="1">Homotrimer.</text>
</comment>
<comment type="similarity">
    <text evidence="1">Belongs to the transferase hexapeptide repeat family. LpxD subfamily.</text>
</comment>
<proteinExistence type="inferred from homology"/>
<organism>
    <name type="scientific">Bradyrhizobium sp. (strain BTAi1 / ATCC BAA-1182)</name>
    <dbReference type="NCBI Taxonomy" id="288000"/>
    <lineage>
        <taxon>Bacteria</taxon>
        <taxon>Pseudomonadati</taxon>
        <taxon>Pseudomonadota</taxon>
        <taxon>Alphaproteobacteria</taxon>
        <taxon>Hyphomicrobiales</taxon>
        <taxon>Nitrobacteraceae</taxon>
        <taxon>Bradyrhizobium</taxon>
    </lineage>
</organism>
<feature type="chain" id="PRO_1000050926" description="UDP-3-O-acylglucosamine N-acyltransferase">
    <location>
        <begin position="1"/>
        <end position="355"/>
    </location>
</feature>
<feature type="active site" description="Proton acceptor" evidence="1">
    <location>
        <position position="258"/>
    </location>
</feature>
<accession>A5EK46</accession>
<dbReference type="EC" id="2.3.1.191" evidence="1"/>
<dbReference type="EMBL" id="CP000494">
    <property type="protein sequence ID" value="ABQ36540.1"/>
    <property type="molecule type" value="Genomic_DNA"/>
</dbReference>
<dbReference type="RefSeq" id="WP_012044536.1">
    <property type="nucleotide sequence ID" value="NC_009485.1"/>
</dbReference>
<dbReference type="SMR" id="A5EK46"/>
<dbReference type="STRING" id="288000.BBta_4508"/>
<dbReference type="KEGG" id="bbt:BBta_4508"/>
<dbReference type="eggNOG" id="COG1044">
    <property type="taxonomic scope" value="Bacteria"/>
</dbReference>
<dbReference type="HOGENOM" id="CLU_049865_0_2_5"/>
<dbReference type="OrthoDB" id="9784739at2"/>
<dbReference type="UniPathway" id="UPA00973"/>
<dbReference type="Proteomes" id="UP000000246">
    <property type="component" value="Chromosome"/>
</dbReference>
<dbReference type="GO" id="GO:0016020">
    <property type="term" value="C:membrane"/>
    <property type="evidence" value="ECO:0007669"/>
    <property type="project" value="GOC"/>
</dbReference>
<dbReference type="GO" id="GO:0016410">
    <property type="term" value="F:N-acyltransferase activity"/>
    <property type="evidence" value="ECO:0007669"/>
    <property type="project" value="InterPro"/>
</dbReference>
<dbReference type="GO" id="GO:0009245">
    <property type="term" value="P:lipid A biosynthetic process"/>
    <property type="evidence" value="ECO:0007669"/>
    <property type="project" value="UniProtKB-UniRule"/>
</dbReference>
<dbReference type="CDD" id="cd03352">
    <property type="entry name" value="LbH_LpxD"/>
    <property type="match status" value="1"/>
</dbReference>
<dbReference type="Gene3D" id="2.160.10.10">
    <property type="entry name" value="Hexapeptide repeat proteins"/>
    <property type="match status" value="1"/>
</dbReference>
<dbReference type="Gene3D" id="3.40.1390.10">
    <property type="entry name" value="MurE/MurF, N-terminal domain"/>
    <property type="match status" value="1"/>
</dbReference>
<dbReference type="HAMAP" id="MF_00523">
    <property type="entry name" value="LpxD"/>
    <property type="match status" value="1"/>
</dbReference>
<dbReference type="InterPro" id="IPR001451">
    <property type="entry name" value="Hexapep"/>
</dbReference>
<dbReference type="InterPro" id="IPR018357">
    <property type="entry name" value="Hexapep_transf_CS"/>
</dbReference>
<dbReference type="InterPro" id="IPR007691">
    <property type="entry name" value="LpxD"/>
</dbReference>
<dbReference type="InterPro" id="IPR011004">
    <property type="entry name" value="Trimer_LpxA-like_sf"/>
</dbReference>
<dbReference type="InterPro" id="IPR020573">
    <property type="entry name" value="UDP_GlcNAc_AcTrfase_non-rep"/>
</dbReference>
<dbReference type="NCBIfam" id="TIGR01853">
    <property type="entry name" value="lipid_A_lpxD"/>
    <property type="match status" value="1"/>
</dbReference>
<dbReference type="NCBIfam" id="NF002060">
    <property type="entry name" value="PRK00892.1"/>
    <property type="match status" value="1"/>
</dbReference>
<dbReference type="PANTHER" id="PTHR43378">
    <property type="entry name" value="UDP-3-O-ACYLGLUCOSAMINE N-ACYLTRANSFERASE"/>
    <property type="match status" value="1"/>
</dbReference>
<dbReference type="PANTHER" id="PTHR43378:SF2">
    <property type="entry name" value="UDP-3-O-ACYLGLUCOSAMINE N-ACYLTRANSFERASE 1, MITOCHONDRIAL-RELATED"/>
    <property type="match status" value="1"/>
</dbReference>
<dbReference type="Pfam" id="PF00132">
    <property type="entry name" value="Hexapep"/>
    <property type="match status" value="2"/>
</dbReference>
<dbReference type="Pfam" id="PF04613">
    <property type="entry name" value="LpxD"/>
    <property type="match status" value="1"/>
</dbReference>
<dbReference type="SUPFAM" id="SSF51161">
    <property type="entry name" value="Trimeric LpxA-like enzymes"/>
    <property type="match status" value="1"/>
</dbReference>
<dbReference type="PROSITE" id="PS00101">
    <property type="entry name" value="HEXAPEP_TRANSFERASES"/>
    <property type="match status" value="1"/>
</dbReference>
<evidence type="ECO:0000255" key="1">
    <source>
        <dbReference type="HAMAP-Rule" id="MF_00523"/>
    </source>
</evidence>
<reference key="1">
    <citation type="journal article" date="2007" name="Science">
        <title>Legumes symbioses: absence of nod genes in photosynthetic bradyrhizobia.</title>
        <authorList>
            <person name="Giraud E."/>
            <person name="Moulin L."/>
            <person name="Vallenet D."/>
            <person name="Barbe V."/>
            <person name="Cytryn E."/>
            <person name="Avarre J.-C."/>
            <person name="Jaubert M."/>
            <person name="Simon D."/>
            <person name="Cartieaux F."/>
            <person name="Prin Y."/>
            <person name="Bena G."/>
            <person name="Hannibal L."/>
            <person name="Fardoux J."/>
            <person name="Kojadinovic M."/>
            <person name="Vuillet L."/>
            <person name="Lajus A."/>
            <person name="Cruveiller S."/>
            <person name="Rouy Z."/>
            <person name="Mangenot S."/>
            <person name="Segurens B."/>
            <person name="Dossat C."/>
            <person name="Franck W.L."/>
            <person name="Chang W.-S."/>
            <person name="Saunders E."/>
            <person name="Bruce D."/>
            <person name="Richardson P."/>
            <person name="Normand P."/>
            <person name="Dreyfus B."/>
            <person name="Pignol D."/>
            <person name="Stacey G."/>
            <person name="Emerich D."/>
            <person name="Vermeglio A."/>
            <person name="Medigue C."/>
            <person name="Sadowsky M."/>
        </authorList>
    </citation>
    <scope>NUCLEOTIDE SEQUENCE [LARGE SCALE GENOMIC DNA]</scope>
    <source>
        <strain>BTAi1 / ATCC BAA-1182</strain>
    </source>
</reference>
<keyword id="KW-0012">Acyltransferase</keyword>
<keyword id="KW-0441">Lipid A biosynthesis</keyword>
<keyword id="KW-0444">Lipid biosynthesis</keyword>
<keyword id="KW-0443">Lipid metabolism</keyword>
<keyword id="KW-1185">Reference proteome</keyword>
<keyword id="KW-0677">Repeat</keyword>
<keyword id="KW-0808">Transferase</keyword>